<name>RS19_RHILO</name>
<gene>
    <name evidence="1" type="primary">rpsS</name>
    <name type="ordered locus">msr0297</name>
</gene>
<feature type="chain" id="PRO_0000129887" description="Small ribosomal subunit protein uS19">
    <location>
        <begin position="1"/>
        <end position="92"/>
    </location>
</feature>
<comment type="function">
    <text evidence="1">Protein S19 forms a complex with S13 that binds strongly to the 16S ribosomal RNA.</text>
</comment>
<comment type="similarity">
    <text evidence="1">Belongs to the universal ribosomal protein uS19 family.</text>
</comment>
<evidence type="ECO:0000255" key="1">
    <source>
        <dbReference type="HAMAP-Rule" id="MF_00531"/>
    </source>
</evidence>
<evidence type="ECO:0000305" key="2"/>
<reference key="1">
    <citation type="journal article" date="2000" name="DNA Res.">
        <title>Complete genome structure of the nitrogen-fixing symbiotic bacterium Mesorhizobium loti.</title>
        <authorList>
            <person name="Kaneko T."/>
            <person name="Nakamura Y."/>
            <person name="Sato S."/>
            <person name="Asamizu E."/>
            <person name="Kato T."/>
            <person name="Sasamoto S."/>
            <person name="Watanabe A."/>
            <person name="Idesawa K."/>
            <person name="Ishikawa A."/>
            <person name="Kawashima K."/>
            <person name="Kimura T."/>
            <person name="Kishida Y."/>
            <person name="Kiyokawa C."/>
            <person name="Kohara M."/>
            <person name="Matsumoto M."/>
            <person name="Matsuno A."/>
            <person name="Mochizuki Y."/>
            <person name="Nakayama S."/>
            <person name="Nakazaki N."/>
            <person name="Shimpo S."/>
            <person name="Sugimoto M."/>
            <person name="Takeuchi C."/>
            <person name="Yamada M."/>
            <person name="Tabata S."/>
        </authorList>
    </citation>
    <scope>NUCLEOTIDE SEQUENCE [LARGE SCALE GENOMIC DNA]</scope>
    <source>
        <strain>LMG 29417 / CECT 9101 / MAFF 303099</strain>
    </source>
</reference>
<sequence>MTRSIWKGPFIDGYLLKKVDKVREGGRNEVIKMWSRRSTILPQFVGFTFGVYNGQKHVPVSVNEDMVGHKFGEFAPTRTYYGHGADKKAKRK</sequence>
<protein>
    <recommendedName>
        <fullName evidence="1">Small ribosomal subunit protein uS19</fullName>
    </recommendedName>
    <alternativeName>
        <fullName evidence="2">30S ribosomal protein S19</fullName>
    </alternativeName>
</protein>
<accession>Q98N53</accession>
<dbReference type="EMBL" id="BA000012">
    <property type="protein sequence ID" value="BAB47910.1"/>
    <property type="molecule type" value="Genomic_DNA"/>
</dbReference>
<dbReference type="RefSeq" id="WP_006205463.1">
    <property type="nucleotide sequence ID" value="NC_002678.2"/>
</dbReference>
<dbReference type="SMR" id="Q98N53"/>
<dbReference type="GeneID" id="91561416"/>
<dbReference type="KEGG" id="mlo:msr0297"/>
<dbReference type="eggNOG" id="COG0185">
    <property type="taxonomic scope" value="Bacteria"/>
</dbReference>
<dbReference type="HOGENOM" id="CLU_144911_0_1_5"/>
<dbReference type="Proteomes" id="UP000000552">
    <property type="component" value="Chromosome"/>
</dbReference>
<dbReference type="GO" id="GO:0005737">
    <property type="term" value="C:cytoplasm"/>
    <property type="evidence" value="ECO:0007669"/>
    <property type="project" value="UniProtKB-ARBA"/>
</dbReference>
<dbReference type="GO" id="GO:0015935">
    <property type="term" value="C:small ribosomal subunit"/>
    <property type="evidence" value="ECO:0007669"/>
    <property type="project" value="InterPro"/>
</dbReference>
<dbReference type="GO" id="GO:0019843">
    <property type="term" value="F:rRNA binding"/>
    <property type="evidence" value="ECO:0007669"/>
    <property type="project" value="UniProtKB-UniRule"/>
</dbReference>
<dbReference type="GO" id="GO:0003735">
    <property type="term" value="F:structural constituent of ribosome"/>
    <property type="evidence" value="ECO:0007669"/>
    <property type="project" value="InterPro"/>
</dbReference>
<dbReference type="GO" id="GO:0000028">
    <property type="term" value="P:ribosomal small subunit assembly"/>
    <property type="evidence" value="ECO:0007669"/>
    <property type="project" value="TreeGrafter"/>
</dbReference>
<dbReference type="GO" id="GO:0006412">
    <property type="term" value="P:translation"/>
    <property type="evidence" value="ECO:0007669"/>
    <property type="project" value="UniProtKB-UniRule"/>
</dbReference>
<dbReference type="FunFam" id="3.30.860.10:FF:000001">
    <property type="entry name" value="30S ribosomal protein S19"/>
    <property type="match status" value="1"/>
</dbReference>
<dbReference type="Gene3D" id="3.30.860.10">
    <property type="entry name" value="30s Ribosomal Protein S19, Chain A"/>
    <property type="match status" value="1"/>
</dbReference>
<dbReference type="HAMAP" id="MF_00531">
    <property type="entry name" value="Ribosomal_uS19"/>
    <property type="match status" value="1"/>
</dbReference>
<dbReference type="InterPro" id="IPR002222">
    <property type="entry name" value="Ribosomal_uS19"/>
</dbReference>
<dbReference type="InterPro" id="IPR005732">
    <property type="entry name" value="Ribosomal_uS19_bac-type"/>
</dbReference>
<dbReference type="InterPro" id="IPR020934">
    <property type="entry name" value="Ribosomal_uS19_CS"/>
</dbReference>
<dbReference type="InterPro" id="IPR023575">
    <property type="entry name" value="Ribosomal_uS19_SF"/>
</dbReference>
<dbReference type="NCBIfam" id="TIGR01050">
    <property type="entry name" value="rpsS_bact"/>
    <property type="match status" value="1"/>
</dbReference>
<dbReference type="PANTHER" id="PTHR11880">
    <property type="entry name" value="RIBOSOMAL PROTEIN S19P FAMILY MEMBER"/>
    <property type="match status" value="1"/>
</dbReference>
<dbReference type="PANTHER" id="PTHR11880:SF8">
    <property type="entry name" value="SMALL RIBOSOMAL SUBUNIT PROTEIN US19M"/>
    <property type="match status" value="1"/>
</dbReference>
<dbReference type="Pfam" id="PF00203">
    <property type="entry name" value="Ribosomal_S19"/>
    <property type="match status" value="1"/>
</dbReference>
<dbReference type="PIRSF" id="PIRSF002144">
    <property type="entry name" value="Ribosomal_S19"/>
    <property type="match status" value="1"/>
</dbReference>
<dbReference type="PRINTS" id="PR00975">
    <property type="entry name" value="RIBOSOMALS19"/>
</dbReference>
<dbReference type="SUPFAM" id="SSF54570">
    <property type="entry name" value="Ribosomal protein S19"/>
    <property type="match status" value="1"/>
</dbReference>
<dbReference type="PROSITE" id="PS00323">
    <property type="entry name" value="RIBOSOMAL_S19"/>
    <property type="match status" value="1"/>
</dbReference>
<keyword id="KW-0687">Ribonucleoprotein</keyword>
<keyword id="KW-0689">Ribosomal protein</keyword>
<keyword id="KW-0694">RNA-binding</keyword>
<keyword id="KW-0699">rRNA-binding</keyword>
<proteinExistence type="inferred from homology"/>
<organism>
    <name type="scientific">Mesorhizobium japonicum (strain LMG 29417 / CECT 9101 / MAFF 303099)</name>
    <name type="common">Mesorhizobium loti (strain MAFF 303099)</name>
    <dbReference type="NCBI Taxonomy" id="266835"/>
    <lineage>
        <taxon>Bacteria</taxon>
        <taxon>Pseudomonadati</taxon>
        <taxon>Pseudomonadota</taxon>
        <taxon>Alphaproteobacteria</taxon>
        <taxon>Hyphomicrobiales</taxon>
        <taxon>Phyllobacteriaceae</taxon>
        <taxon>Mesorhizobium</taxon>
    </lineage>
</organism>